<proteinExistence type="inferred from homology"/>
<protein>
    <recommendedName>
        <fullName evidence="1">Ribosomal RNA small subunit methyltransferase H</fullName>
        <ecNumber evidence="1">2.1.1.199</ecNumber>
    </recommendedName>
    <alternativeName>
        <fullName evidence="1">16S rRNA m(4)C1402 methyltransferase</fullName>
    </alternativeName>
    <alternativeName>
        <fullName evidence="1">rRNA (cytosine-N(4)-)-methyltransferase RsmH</fullName>
    </alternativeName>
</protein>
<keyword id="KW-0963">Cytoplasm</keyword>
<keyword id="KW-0489">Methyltransferase</keyword>
<keyword id="KW-1185">Reference proteome</keyword>
<keyword id="KW-0698">rRNA processing</keyword>
<keyword id="KW-0949">S-adenosyl-L-methionine</keyword>
<keyword id="KW-0808">Transferase</keyword>
<dbReference type="EC" id="2.1.1.199" evidence="1"/>
<dbReference type="EMBL" id="CP001043">
    <property type="protein sequence ID" value="ACC71853.1"/>
    <property type="molecule type" value="Genomic_DNA"/>
</dbReference>
<dbReference type="RefSeq" id="WP_012402052.1">
    <property type="nucleotide sequence ID" value="NC_010622.1"/>
</dbReference>
<dbReference type="SMR" id="B2JHG8"/>
<dbReference type="STRING" id="391038.Bphy_2681"/>
<dbReference type="KEGG" id="bph:Bphy_2681"/>
<dbReference type="eggNOG" id="COG0275">
    <property type="taxonomic scope" value="Bacteria"/>
</dbReference>
<dbReference type="HOGENOM" id="CLU_038422_2_0_4"/>
<dbReference type="OrthoDB" id="9806637at2"/>
<dbReference type="Proteomes" id="UP000001192">
    <property type="component" value="Chromosome 1"/>
</dbReference>
<dbReference type="GO" id="GO:0005737">
    <property type="term" value="C:cytoplasm"/>
    <property type="evidence" value="ECO:0007669"/>
    <property type="project" value="UniProtKB-SubCell"/>
</dbReference>
<dbReference type="GO" id="GO:0071424">
    <property type="term" value="F:rRNA (cytosine-N4-)-methyltransferase activity"/>
    <property type="evidence" value="ECO:0007669"/>
    <property type="project" value="UniProtKB-UniRule"/>
</dbReference>
<dbReference type="GO" id="GO:0070475">
    <property type="term" value="P:rRNA base methylation"/>
    <property type="evidence" value="ECO:0007669"/>
    <property type="project" value="UniProtKB-UniRule"/>
</dbReference>
<dbReference type="Gene3D" id="1.10.150.170">
    <property type="entry name" value="Putative methyltransferase TM0872, insert domain"/>
    <property type="match status" value="1"/>
</dbReference>
<dbReference type="Gene3D" id="3.40.50.150">
    <property type="entry name" value="Vaccinia Virus protein VP39"/>
    <property type="match status" value="1"/>
</dbReference>
<dbReference type="HAMAP" id="MF_01007">
    <property type="entry name" value="16SrRNA_methyltr_H"/>
    <property type="match status" value="1"/>
</dbReference>
<dbReference type="InterPro" id="IPR002903">
    <property type="entry name" value="RsmH"/>
</dbReference>
<dbReference type="InterPro" id="IPR023397">
    <property type="entry name" value="SAM-dep_MeTrfase_MraW_recog"/>
</dbReference>
<dbReference type="InterPro" id="IPR029063">
    <property type="entry name" value="SAM-dependent_MTases_sf"/>
</dbReference>
<dbReference type="NCBIfam" id="TIGR00006">
    <property type="entry name" value="16S rRNA (cytosine(1402)-N(4))-methyltransferase RsmH"/>
    <property type="match status" value="1"/>
</dbReference>
<dbReference type="PANTHER" id="PTHR11265:SF0">
    <property type="entry name" value="12S RRNA N4-METHYLCYTIDINE METHYLTRANSFERASE"/>
    <property type="match status" value="1"/>
</dbReference>
<dbReference type="PANTHER" id="PTHR11265">
    <property type="entry name" value="S-ADENOSYL-METHYLTRANSFERASE MRAW"/>
    <property type="match status" value="1"/>
</dbReference>
<dbReference type="Pfam" id="PF01795">
    <property type="entry name" value="Methyltransf_5"/>
    <property type="match status" value="1"/>
</dbReference>
<dbReference type="PIRSF" id="PIRSF004486">
    <property type="entry name" value="MraW"/>
    <property type="match status" value="1"/>
</dbReference>
<dbReference type="SUPFAM" id="SSF81799">
    <property type="entry name" value="Putative methyltransferase TM0872, insert domain"/>
    <property type="match status" value="1"/>
</dbReference>
<dbReference type="SUPFAM" id="SSF53335">
    <property type="entry name" value="S-adenosyl-L-methionine-dependent methyltransferases"/>
    <property type="match status" value="1"/>
</dbReference>
<gene>
    <name evidence="1" type="primary">rsmH</name>
    <name type="synonym">mraW</name>
    <name type="ordered locus">Bphy_2681</name>
</gene>
<feature type="chain" id="PRO_0000386776" description="Ribosomal RNA small subunit methyltransferase H">
    <location>
        <begin position="1"/>
        <end position="317"/>
    </location>
</feature>
<feature type="binding site" evidence="1">
    <location>
        <begin position="39"/>
        <end position="41"/>
    </location>
    <ligand>
        <name>S-adenosyl-L-methionine</name>
        <dbReference type="ChEBI" id="CHEBI:59789"/>
    </ligand>
</feature>
<feature type="binding site" evidence="1">
    <location>
        <position position="59"/>
    </location>
    <ligand>
        <name>S-adenosyl-L-methionine</name>
        <dbReference type="ChEBI" id="CHEBI:59789"/>
    </ligand>
</feature>
<feature type="binding site" evidence="1">
    <location>
        <position position="83"/>
    </location>
    <ligand>
        <name>S-adenosyl-L-methionine</name>
        <dbReference type="ChEBI" id="CHEBI:59789"/>
    </ligand>
</feature>
<feature type="binding site" evidence="1">
    <location>
        <position position="104"/>
    </location>
    <ligand>
        <name>S-adenosyl-L-methionine</name>
        <dbReference type="ChEBI" id="CHEBI:59789"/>
    </ligand>
</feature>
<feature type="binding site" evidence="1">
    <location>
        <position position="111"/>
    </location>
    <ligand>
        <name>S-adenosyl-L-methionine</name>
        <dbReference type="ChEBI" id="CHEBI:59789"/>
    </ligand>
</feature>
<sequence>MAPAMGNELQHRTVLLEEAVNALVTRVDGIYIDGTFGRGGHSRAVLAKLGEAGRLIAFDKDPLAIATAQQVADPRFEIVHESFASLRDAMSERAVGRVSGVLLDLGVSSPQFDDPERGFSFRADGPLDMRMDPTRGESAADWLARATVQEMTEVIRDYGEERFAFQIAKALVARRAESDRLGPLVSTGELAQIVANVVKTREKGKDPATRTFQAIRIHINQELAELQVVLEAALSLLEQGGRLVVISFHSLEDRIVKRFMQTHSSAPAVDRRLPIRAVDLPSPPLKLLGRVFASDEEVAANPRARSAVMRVAERIAP</sequence>
<name>RSMH_PARP8</name>
<accession>B2JHG8</accession>
<evidence type="ECO:0000255" key="1">
    <source>
        <dbReference type="HAMAP-Rule" id="MF_01007"/>
    </source>
</evidence>
<comment type="function">
    <text evidence="1">Specifically methylates the N4 position of cytidine in position 1402 (C1402) of 16S rRNA.</text>
</comment>
<comment type="catalytic activity">
    <reaction evidence="1">
        <text>cytidine(1402) in 16S rRNA + S-adenosyl-L-methionine = N(4)-methylcytidine(1402) in 16S rRNA + S-adenosyl-L-homocysteine + H(+)</text>
        <dbReference type="Rhea" id="RHEA:42928"/>
        <dbReference type="Rhea" id="RHEA-COMP:10286"/>
        <dbReference type="Rhea" id="RHEA-COMP:10287"/>
        <dbReference type="ChEBI" id="CHEBI:15378"/>
        <dbReference type="ChEBI" id="CHEBI:57856"/>
        <dbReference type="ChEBI" id="CHEBI:59789"/>
        <dbReference type="ChEBI" id="CHEBI:74506"/>
        <dbReference type="ChEBI" id="CHEBI:82748"/>
        <dbReference type="EC" id="2.1.1.199"/>
    </reaction>
</comment>
<comment type="subcellular location">
    <subcellularLocation>
        <location evidence="1">Cytoplasm</location>
    </subcellularLocation>
</comment>
<comment type="similarity">
    <text evidence="1">Belongs to the methyltransferase superfamily. RsmH family.</text>
</comment>
<reference key="1">
    <citation type="journal article" date="2014" name="Stand. Genomic Sci.">
        <title>Complete genome sequence of Burkholderia phymatum STM815(T), a broad host range and efficient nitrogen-fixing symbiont of Mimosa species.</title>
        <authorList>
            <person name="Moulin L."/>
            <person name="Klonowska A."/>
            <person name="Caroline B."/>
            <person name="Booth K."/>
            <person name="Vriezen J.A."/>
            <person name="Melkonian R."/>
            <person name="James E.K."/>
            <person name="Young J.P."/>
            <person name="Bena G."/>
            <person name="Hauser L."/>
            <person name="Land M."/>
            <person name="Kyrpides N."/>
            <person name="Bruce D."/>
            <person name="Chain P."/>
            <person name="Copeland A."/>
            <person name="Pitluck S."/>
            <person name="Woyke T."/>
            <person name="Lizotte-Waniewski M."/>
            <person name="Bristow J."/>
            <person name="Riley M."/>
        </authorList>
    </citation>
    <scope>NUCLEOTIDE SEQUENCE [LARGE SCALE GENOMIC DNA]</scope>
    <source>
        <strain>DSM 17167 / CIP 108236 / LMG 21445 / STM815</strain>
    </source>
</reference>
<organism>
    <name type="scientific">Paraburkholderia phymatum (strain DSM 17167 / CIP 108236 / LMG 21445 / STM815)</name>
    <name type="common">Burkholderia phymatum</name>
    <dbReference type="NCBI Taxonomy" id="391038"/>
    <lineage>
        <taxon>Bacteria</taxon>
        <taxon>Pseudomonadati</taxon>
        <taxon>Pseudomonadota</taxon>
        <taxon>Betaproteobacteria</taxon>
        <taxon>Burkholderiales</taxon>
        <taxon>Burkholderiaceae</taxon>
        <taxon>Paraburkholderia</taxon>
    </lineage>
</organism>